<dbReference type="EMBL" id="Z98682">
    <property type="protein sequence ID" value="CAB11347.1"/>
    <property type="molecule type" value="Genomic_DNA"/>
</dbReference>
<dbReference type="EMBL" id="AL009126">
    <property type="protein sequence ID" value="CAB13367.1"/>
    <property type="molecule type" value="Genomic_DNA"/>
</dbReference>
<dbReference type="PIR" id="F69873">
    <property type="entry name" value="F69873"/>
</dbReference>
<dbReference type="RefSeq" id="NP_389377.1">
    <property type="nucleotide sequence ID" value="NC_000964.3"/>
</dbReference>
<dbReference type="RefSeq" id="WP_003232238.1">
    <property type="nucleotide sequence ID" value="NZ_OZ025638.1"/>
</dbReference>
<dbReference type="SMR" id="O34743"/>
<dbReference type="FunCoup" id="O34743">
    <property type="interactions" value="171"/>
</dbReference>
<dbReference type="STRING" id="224308.BSU14940"/>
<dbReference type="PaxDb" id="224308-BSU14940"/>
<dbReference type="EnsemblBacteria" id="CAB13367">
    <property type="protein sequence ID" value="CAB13367"/>
    <property type="gene ID" value="BSU_14940"/>
</dbReference>
<dbReference type="GeneID" id="939858"/>
<dbReference type="KEGG" id="bsu:BSU14940"/>
<dbReference type="PATRIC" id="fig|224308.43.peg.1586"/>
<dbReference type="eggNOG" id="ENOG50317VK">
    <property type="taxonomic scope" value="Bacteria"/>
</dbReference>
<dbReference type="InParanoid" id="O34743"/>
<dbReference type="OrthoDB" id="2679642at2"/>
<dbReference type="BioCyc" id="BSUB:BSU14940-MONOMER"/>
<dbReference type="Proteomes" id="UP000001570">
    <property type="component" value="Chromosome"/>
</dbReference>
<dbReference type="Gene3D" id="3.30.310.100">
    <property type="entry name" value="YugN-like"/>
    <property type="match status" value="1"/>
</dbReference>
<dbReference type="InterPro" id="IPR014967">
    <property type="entry name" value="Uncharacterised_YugN-like"/>
</dbReference>
<dbReference type="InterPro" id="IPR036491">
    <property type="entry name" value="YugN-like_sf"/>
</dbReference>
<dbReference type="Pfam" id="PF08868">
    <property type="entry name" value="YugN"/>
    <property type="match status" value="1"/>
</dbReference>
<dbReference type="SUPFAM" id="SSF160755">
    <property type="entry name" value="YugN-like"/>
    <property type="match status" value="1"/>
</dbReference>
<accession>O34743</accession>
<accession>Q797T8</accession>
<name>YLBA_BACSU</name>
<sequence>MLKFTESGLEGVKAELSWLDDLMESKGLIRAGQWDYERVTYDKKFSTIEGTFYLRIQGIAAEGDVGSGRAVIQLMSPLLGKHYYPHGVEYGETEEFPVQVVTKSKALIQDIANMLKTVQM</sequence>
<reference key="1">
    <citation type="submission" date="1997-08" db="EMBL/GenBank/DDBJ databases">
        <title>Bacillus subtilis chromosomal region downstream nprE.</title>
        <authorList>
            <person name="Bertero M."/>
            <person name="Presecan E."/>
            <person name="Glaser P."/>
            <person name="Richou A."/>
            <person name="Danchin A."/>
        </authorList>
    </citation>
    <scope>NUCLEOTIDE SEQUENCE [GENOMIC DNA]</scope>
    <source>
        <strain>168</strain>
    </source>
</reference>
<reference key="2">
    <citation type="journal article" date="1997" name="Nature">
        <title>The complete genome sequence of the Gram-positive bacterium Bacillus subtilis.</title>
        <authorList>
            <person name="Kunst F."/>
            <person name="Ogasawara N."/>
            <person name="Moszer I."/>
            <person name="Albertini A.M."/>
            <person name="Alloni G."/>
            <person name="Azevedo V."/>
            <person name="Bertero M.G."/>
            <person name="Bessieres P."/>
            <person name="Bolotin A."/>
            <person name="Borchert S."/>
            <person name="Borriss R."/>
            <person name="Boursier L."/>
            <person name="Brans A."/>
            <person name="Braun M."/>
            <person name="Brignell S.C."/>
            <person name="Bron S."/>
            <person name="Brouillet S."/>
            <person name="Bruschi C.V."/>
            <person name="Caldwell B."/>
            <person name="Capuano V."/>
            <person name="Carter N.M."/>
            <person name="Choi S.-K."/>
            <person name="Codani J.-J."/>
            <person name="Connerton I.F."/>
            <person name="Cummings N.J."/>
            <person name="Daniel R.A."/>
            <person name="Denizot F."/>
            <person name="Devine K.M."/>
            <person name="Duesterhoeft A."/>
            <person name="Ehrlich S.D."/>
            <person name="Emmerson P.T."/>
            <person name="Entian K.-D."/>
            <person name="Errington J."/>
            <person name="Fabret C."/>
            <person name="Ferrari E."/>
            <person name="Foulger D."/>
            <person name="Fritz C."/>
            <person name="Fujita M."/>
            <person name="Fujita Y."/>
            <person name="Fuma S."/>
            <person name="Galizzi A."/>
            <person name="Galleron N."/>
            <person name="Ghim S.-Y."/>
            <person name="Glaser P."/>
            <person name="Goffeau A."/>
            <person name="Golightly E.J."/>
            <person name="Grandi G."/>
            <person name="Guiseppi G."/>
            <person name="Guy B.J."/>
            <person name="Haga K."/>
            <person name="Haiech J."/>
            <person name="Harwood C.R."/>
            <person name="Henaut A."/>
            <person name="Hilbert H."/>
            <person name="Holsappel S."/>
            <person name="Hosono S."/>
            <person name="Hullo M.-F."/>
            <person name="Itaya M."/>
            <person name="Jones L.-M."/>
            <person name="Joris B."/>
            <person name="Karamata D."/>
            <person name="Kasahara Y."/>
            <person name="Klaerr-Blanchard M."/>
            <person name="Klein C."/>
            <person name="Kobayashi Y."/>
            <person name="Koetter P."/>
            <person name="Koningstein G."/>
            <person name="Krogh S."/>
            <person name="Kumano M."/>
            <person name="Kurita K."/>
            <person name="Lapidus A."/>
            <person name="Lardinois S."/>
            <person name="Lauber J."/>
            <person name="Lazarevic V."/>
            <person name="Lee S.-M."/>
            <person name="Levine A."/>
            <person name="Liu H."/>
            <person name="Masuda S."/>
            <person name="Mauel C."/>
            <person name="Medigue C."/>
            <person name="Medina N."/>
            <person name="Mellado R.P."/>
            <person name="Mizuno M."/>
            <person name="Moestl D."/>
            <person name="Nakai S."/>
            <person name="Noback M."/>
            <person name="Noone D."/>
            <person name="O'Reilly M."/>
            <person name="Ogawa K."/>
            <person name="Ogiwara A."/>
            <person name="Oudega B."/>
            <person name="Park S.-H."/>
            <person name="Parro V."/>
            <person name="Pohl T.M."/>
            <person name="Portetelle D."/>
            <person name="Porwollik S."/>
            <person name="Prescott A.M."/>
            <person name="Presecan E."/>
            <person name="Pujic P."/>
            <person name="Purnelle B."/>
            <person name="Rapoport G."/>
            <person name="Rey M."/>
            <person name="Reynolds S."/>
            <person name="Rieger M."/>
            <person name="Rivolta C."/>
            <person name="Rocha E."/>
            <person name="Roche B."/>
            <person name="Rose M."/>
            <person name="Sadaie Y."/>
            <person name="Sato T."/>
            <person name="Scanlan E."/>
            <person name="Schleich S."/>
            <person name="Schroeter R."/>
            <person name="Scoffone F."/>
            <person name="Sekiguchi J."/>
            <person name="Sekowska A."/>
            <person name="Seror S.J."/>
            <person name="Serror P."/>
            <person name="Shin B.-S."/>
            <person name="Soldo B."/>
            <person name="Sorokin A."/>
            <person name="Tacconi E."/>
            <person name="Takagi T."/>
            <person name="Takahashi H."/>
            <person name="Takemaru K."/>
            <person name="Takeuchi M."/>
            <person name="Tamakoshi A."/>
            <person name="Tanaka T."/>
            <person name="Terpstra P."/>
            <person name="Tognoni A."/>
            <person name="Tosato V."/>
            <person name="Uchiyama S."/>
            <person name="Vandenbol M."/>
            <person name="Vannier F."/>
            <person name="Vassarotti A."/>
            <person name="Viari A."/>
            <person name="Wambutt R."/>
            <person name="Wedler E."/>
            <person name="Wedler H."/>
            <person name="Weitzenegger T."/>
            <person name="Winters P."/>
            <person name="Wipat A."/>
            <person name="Yamamoto H."/>
            <person name="Yamane K."/>
            <person name="Yasumoto K."/>
            <person name="Yata K."/>
            <person name="Yoshida K."/>
            <person name="Yoshikawa H.-F."/>
            <person name="Zumstein E."/>
            <person name="Yoshikawa H."/>
            <person name="Danchin A."/>
        </authorList>
    </citation>
    <scope>NUCLEOTIDE SEQUENCE [LARGE SCALE GENOMIC DNA]</scope>
    <source>
        <strain>168</strain>
    </source>
</reference>
<feature type="chain" id="PRO_0000388346" description="Uncharacterized protein YlbA">
    <location>
        <begin position="1"/>
        <end position="120"/>
    </location>
</feature>
<keyword id="KW-1185">Reference proteome</keyword>
<gene>
    <name type="primary">ylbA</name>
    <name type="ordered locus">BSU14940</name>
</gene>
<protein>
    <recommendedName>
        <fullName>Uncharacterized protein YlbA</fullName>
    </recommendedName>
</protein>
<organism>
    <name type="scientific">Bacillus subtilis (strain 168)</name>
    <dbReference type="NCBI Taxonomy" id="224308"/>
    <lineage>
        <taxon>Bacteria</taxon>
        <taxon>Bacillati</taxon>
        <taxon>Bacillota</taxon>
        <taxon>Bacilli</taxon>
        <taxon>Bacillales</taxon>
        <taxon>Bacillaceae</taxon>
        <taxon>Bacillus</taxon>
    </lineage>
</organism>
<proteinExistence type="predicted"/>